<feature type="chain" id="PRO_0000421050" description="Tetraspanin-10">
    <location>
        <begin position="1"/>
        <end position="284"/>
    </location>
</feature>
<feature type="topological domain" description="Cytoplasmic" evidence="2">
    <location>
        <begin position="1"/>
        <end position="11"/>
    </location>
</feature>
<feature type="transmembrane region" description="Helical" evidence="2">
    <location>
        <begin position="12"/>
        <end position="32"/>
    </location>
</feature>
<feature type="topological domain" description="Extracellular" evidence="2">
    <location>
        <begin position="33"/>
        <end position="43"/>
    </location>
</feature>
<feature type="transmembrane region" description="Helical" evidence="2">
    <location>
        <begin position="44"/>
        <end position="64"/>
    </location>
</feature>
<feature type="topological domain" description="Cytoplasmic" evidence="2">
    <location>
        <begin position="65"/>
        <end position="75"/>
    </location>
</feature>
<feature type="transmembrane region" description="Helical" evidence="2">
    <location>
        <begin position="76"/>
        <end position="96"/>
    </location>
</feature>
<feature type="topological domain" description="Extracellular" evidence="2">
    <location>
        <begin position="97"/>
        <end position="228"/>
    </location>
</feature>
<feature type="transmembrane region" description="Helical" evidence="2">
    <location>
        <begin position="229"/>
        <end position="249"/>
    </location>
</feature>
<feature type="topological domain" description="Cytoplasmic" evidence="2">
    <location>
        <begin position="250"/>
        <end position="284"/>
    </location>
</feature>
<feature type="glycosylation site" description="N-linked (GlcNAc...) asparagine" evidence="2">
    <location>
        <position position="99"/>
    </location>
</feature>
<feature type="glycosylation site" description="N-linked (GlcNAc...) asparagine" evidence="2">
    <location>
        <position position="128"/>
    </location>
</feature>
<feature type="glycosylation site" description="N-linked (GlcNAc...) asparagine" evidence="2">
    <location>
        <position position="183"/>
    </location>
</feature>
<feature type="splice variant" id="VSP_045056" description="In isoform 2." evidence="4 5">
    <original>VLFVVLISSLLSTRFDSEQSF</original>
    <variation>SMVYFVGCCARRNAASYRSKA</variation>
    <location>
        <begin position="238"/>
        <end position="258"/>
    </location>
</feature>
<feature type="splice variant" id="VSP_045057" description="In isoform 2." evidence="4 5">
    <location>
        <begin position="259"/>
        <end position="284"/>
    </location>
</feature>
<feature type="splice variant" id="VSP_045058" description="In isoform 3." evidence="3">
    <original>NGLVQISNITFKDCQTTTVPKQF</original>
    <variation>NVNGLLCWMLCEKKCC</variation>
    <location>
        <begin position="262"/>
        <end position="284"/>
    </location>
</feature>
<feature type="sequence conflict" description="In Ref. 4; BAH19633." evidence="6" ref="4">
    <original>C</original>
    <variation>Y</variation>
    <location>
        <position position="214"/>
    </location>
</feature>
<feature type="sequence conflict" description="In Ref. 6; BAF00089." evidence="6" ref="6">
    <original>A</original>
    <variation>G</variation>
    <location>
        <position position="222"/>
    </location>
</feature>
<organism>
    <name type="scientific">Arabidopsis thaliana</name>
    <name type="common">Mouse-ear cress</name>
    <dbReference type="NCBI Taxonomy" id="3702"/>
    <lineage>
        <taxon>Eukaryota</taxon>
        <taxon>Viridiplantae</taxon>
        <taxon>Streptophyta</taxon>
        <taxon>Embryophyta</taxon>
        <taxon>Tracheophyta</taxon>
        <taxon>Spermatophyta</taxon>
        <taxon>Magnoliopsida</taxon>
        <taxon>eudicotyledons</taxon>
        <taxon>Gunneridae</taxon>
        <taxon>Pentapetalae</taxon>
        <taxon>rosids</taxon>
        <taxon>malvids</taxon>
        <taxon>Brassicales</taxon>
        <taxon>Brassicaceae</taxon>
        <taxon>Camelineae</taxon>
        <taxon>Arabidopsis</taxon>
    </lineage>
</organism>
<dbReference type="EMBL" id="AC022355">
    <property type="protein sequence ID" value="AAG52141.1"/>
    <property type="status" value="ALT_SEQ"/>
    <property type="molecule type" value="Genomic_DNA"/>
</dbReference>
<dbReference type="EMBL" id="CP002684">
    <property type="protein sequence ID" value="AEE34077.1"/>
    <property type="molecule type" value="Genomic_DNA"/>
</dbReference>
<dbReference type="EMBL" id="CP002684">
    <property type="protein sequence ID" value="AEE34078.1"/>
    <property type="molecule type" value="Genomic_DNA"/>
</dbReference>
<dbReference type="EMBL" id="CP002684">
    <property type="protein sequence ID" value="AEE34079.1"/>
    <property type="molecule type" value="Genomic_DNA"/>
</dbReference>
<dbReference type="EMBL" id="CP002684">
    <property type="protein sequence ID" value="ANM58225.1"/>
    <property type="molecule type" value="Genomic_DNA"/>
</dbReference>
<dbReference type="EMBL" id="BX816848">
    <property type="status" value="NOT_ANNOTATED_CDS"/>
    <property type="molecule type" value="mRNA"/>
</dbReference>
<dbReference type="EMBL" id="AK316928">
    <property type="protein sequence ID" value="BAH19633.1"/>
    <property type="molecule type" value="mRNA"/>
</dbReference>
<dbReference type="EMBL" id="BT011569">
    <property type="protein sequence ID" value="AAS21128.1"/>
    <property type="molecule type" value="mRNA"/>
</dbReference>
<dbReference type="EMBL" id="BT012253">
    <property type="protein sequence ID" value="AAS76740.1"/>
    <property type="molecule type" value="mRNA"/>
</dbReference>
<dbReference type="EMBL" id="AK228132">
    <property type="protein sequence ID" value="BAF00089.1"/>
    <property type="molecule type" value="mRNA"/>
</dbReference>
<dbReference type="PIR" id="D96658">
    <property type="entry name" value="D96658"/>
</dbReference>
<dbReference type="RefSeq" id="NP_001031222.1">
    <molecule id="F4I214-3"/>
    <property type="nucleotide sequence ID" value="NM_001036145.3"/>
</dbReference>
<dbReference type="RefSeq" id="NP_001320676.1">
    <molecule id="F4I214-1"/>
    <property type="nucleotide sequence ID" value="NM_001334077.1"/>
</dbReference>
<dbReference type="RefSeq" id="NP_176515.3">
    <molecule id="F4I214-1"/>
    <property type="nucleotide sequence ID" value="NM_105005.5"/>
</dbReference>
<dbReference type="RefSeq" id="NP_974077.1">
    <molecule id="F4I214-2"/>
    <property type="nucleotide sequence ID" value="NM_202348.3"/>
</dbReference>
<dbReference type="FunCoup" id="F4I214">
    <property type="interactions" value="140"/>
</dbReference>
<dbReference type="STRING" id="3702.F4I214"/>
<dbReference type="TCDB" id="8.A.40.4.2">
    <property type="family name" value="the tetraspanin (tetraspanin) family"/>
</dbReference>
<dbReference type="GlyCosmos" id="F4I214">
    <property type="glycosylation" value="3 sites, No reported glycans"/>
</dbReference>
<dbReference type="GlyGen" id="F4I214">
    <property type="glycosylation" value="3 sites"/>
</dbReference>
<dbReference type="PaxDb" id="3702-AT1G63260.1"/>
<dbReference type="ProteomicsDB" id="232698">
    <molecule id="F4I214-1"/>
</dbReference>
<dbReference type="EnsemblPlants" id="AT1G63260.1">
    <molecule id="F4I214-1"/>
    <property type="protein sequence ID" value="AT1G63260.1"/>
    <property type="gene ID" value="AT1G63260"/>
</dbReference>
<dbReference type="EnsemblPlants" id="AT1G63260.2">
    <molecule id="F4I214-2"/>
    <property type="protein sequence ID" value="AT1G63260.2"/>
    <property type="gene ID" value="AT1G63260"/>
</dbReference>
<dbReference type="EnsemblPlants" id="AT1G63260.3">
    <molecule id="F4I214-3"/>
    <property type="protein sequence ID" value="AT1G63260.3"/>
    <property type="gene ID" value="AT1G63260"/>
</dbReference>
<dbReference type="EnsemblPlants" id="AT1G63260.6">
    <molecule id="F4I214-1"/>
    <property type="protein sequence ID" value="AT1G63260.6"/>
    <property type="gene ID" value="AT1G63260"/>
</dbReference>
<dbReference type="GeneID" id="842632"/>
<dbReference type="Gramene" id="AT1G63260.1">
    <molecule id="F4I214-1"/>
    <property type="protein sequence ID" value="AT1G63260.1"/>
    <property type="gene ID" value="AT1G63260"/>
</dbReference>
<dbReference type="Gramene" id="AT1G63260.2">
    <molecule id="F4I214-2"/>
    <property type="protein sequence ID" value="AT1G63260.2"/>
    <property type="gene ID" value="AT1G63260"/>
</dbReference>
<dbReference type="Gramene" id="AT1G63260.3">
    <molecule id="F4I214-3"/>
    <property type="protein sequence ID" value="AT1G63260.3"/>
    <property type="gene ID" value="AT1G63260"/>
</dbReference>
<dbReference type="Gramene" id="AT1G63260.6">
    <molecule id="F4I214-1"/>
    <property type="protein sequence ID" value="AT1G63260.6"/>
    <property type="gene ID" value="AT1G63260"/>
</dbReference>
<dbReference type="KEGG" id="ath:AT1G63260"/>
<dbReference type="Araport" id="AT1G63260"/>
<dbReference type="TAIR" id="AT1G63260">
    <property type="gene designation" value="TET10"/>
</dbReference>
<dbReference type="eggNOG" id="ENOG502QQQM">
    <property type="taxonomic scope" value="Eukaryota"/>
</dbReference>
<dbReference type="InParanoid" id="F4I214"/>
<dbReference type="OMA" id="NRDCKLY"/>
<dbReference type="PRO" id="PR:F4I214"/>
<dbReference type="Proteomes" id="UP000006548">
    <property type="component" value="Chromosome 1"/>
</dbReference>
<dbReference type="ExpressionAtlas" id="F4I214">
    <property type="expression patterns" value="baseline and differential"/>
</dbReference>
<dbReference type="GO" id="GO:0016020">
    <property type="term" value="C:membrane"/>
    <property type="evidence" value="ECO:0007669"/>
    <property type="project" value="UniProtKB-SubCell"/>
</dbReference>
<dbReference type="GO" id="GO:0009734">
    <property type="term" value="P:auxin-activated signaling pathway"/>
    <property type="evidence" value="ECO:0007669"/>
    <property type="project" value="InterPro"/>
</dbReference>
<dbReference type="InterPro" id="IPR044991">
    <property type="entry name" value="TET_plant"/>
</dbReference>
<dbReference type="InterPro" id="IPR018499">
    <property type="entry name" value="Tetraspanin/Peripherin"/>
</dbReference>
<dbReference type="PANTHER" id="PTHR32191">
    <property type="entry name" value="TETRASPANIN-8-RELATED"/>
    <property type="match status" value="1"/>
</dbReference>
<dbReference type="Pfam" id="PF00335">
    <property type="entry name" value="Tetraspanin"/>
    <property type="match status" value="1"/>
</dbReference>
<dbReference type="PRINTS" id="PR00259">
    <property type="entry name" value="TMFOUR"/>
</dbReference>
<gene>
    <name type="primary">TET10</name>
    <name type="ordered locus">At1g63260</name>
    <name type="ORF">F9N12.12</name>
</gene>
<accession>F4I214</accession>
<accession>B9DFW6</accession>
<accession>F4I213</accession>
<accession>Q0WS10</accession>
<accession>Q6NLS7</accession>
<accession>Q9C8T0</accession>
<evidence type="ECO:0000250" key="1"/>
<evidence type="ECO:0000255" key="2"/>
<evidence type="ECO:0000303" key="3">
    <source>
    </source>
</evidence>
<evidence type="ECO:0000303" key="4">
    <source ref="5"/>
</evidence>
<evidence type="ECO:0000303" key="5">
    <source ref="6"/>
</evidence>
<evidence type="ECO:0000305" key="6"/>
<sequence length="284" mass="31919">MGMGTSTFVIRWVNLLTMLLAVAVIIFGVWMSTHNDGCRRSLTFPVIALGGFIFLISIIGFLGACKRSVALLWIYLAVLLIVLIAILVFTVLAFIVTNNGSGHTNPGLRYKEYKLNDYSSWFLKQLNNTSNWIRLKSCLVKSEQCRKLSKKYKTIKQLKSAELTPIEAGCCRPPSECGYPAVNASYYDLSFHSISSNKDCKLYKNLRTIKCYNCDSCKAGVAQYMKTEWRLVAIFNVVLFVVLISSLLSTRFDSEQSFGLLNGLVQISNITFKDCQTTTVPKQF</sequence>
<keyword id="KW-0025">Alternative splicing</keyword>
<keyword id="KW-0325">Glycoprotein</keyword>
<keyword id="KW-0472">Membrane</keyword>
<keyword id="KW-1185">Reference proteome</keyword>
<keyword id="KW-0812">Transmembrane</keyword>
<keyword id="KW-1133">Transmembrane helix</keyword>
<protein>
    <recommendedName>
        <fullName>Tetraspanin-10</fullName>
    </recommendedName>
</protein>
<proteinExistence type="evidence at transcript level"/>
<name>TET10_ARATH</name>
<comment type="function">
    <text evidence="1">May be involved in the regulation of cell differentiation.</text>
</comment>
<comment type="subcellular location">
    <subcellularLocation>
        <location evidence="1">Membrane</location>
        <topology evidence="6">Multi-pass membrane protein</topology>
    </subcellularLocation>
</comment>
<comment type="alternative products">
    <event type="alternative splicing"/>
    <isoform>
        <id>F4I214-1</id>
        <name>1</name>
        <sequence type="displayed"/>
    </isoform>
    <isoform>
        <id>F4I214-2</id>
        <name>2</name>
        <sequence type="described" ref="VSP_045056 VSP_045057"/>
    </isoform>
    <isoform>
        <id>F4I214-3</id>
        <name>3</name>
        <sequence type="described" ref="VSP_045058"/>
    </isoform>
</comment>
<comment type="similarity">
    <text evidence="6">Belongs to the tetraspanin (TM4SF) family.</text>
</comment>
<comment type="sequence caution" evidence="6">
    <conflict type="erroneous gene model prediction">
        <sequence resource="EMBL-CDS" id="AAG52141"/>
    </conflict>
</comment>
<reference key="1">
    <citation type="journal article" date="2000" name="Nature">
        <title>Sequence and analysis of chromosome 1 of the plant Arabidopsis thaliana.</title>
        <authorList>
            <person name="Theologis A."/>
            <person name="Ecker J.R."/>
            <person name="Palm C.J."/>
            <person name="Federspiel N.A."/>
            <person name="Kaul S."/>
            <person name="White O."/>
            <person name="Alonso J."/>
            <person name="Altafi H."/>
            <person name="Araujo R."/>
            <person name="Bowman C.L."/>
            <person name="Brooks S.Y."/>
            <person name="Buehler E."/>
            <person name="Chan A."/>
            <person name="Chao Q."/>
            <person name="Chen H."/>
            <person name="Cheuk R.F."/>
            <person name="Chin C.W."/>
            <person name="Chung M.K."/>
            <person name="Conn L."/>
            <person name="Conway A.B."/>
            <person name="Conway A.R."/>
            <person name="Creasy T.H."/>
            <person name="Dewar K."/>
            <person name="Dunn P."/>
            <person name="Etgu P."/>
            <person name="Feldblyum T.V."/>
            <person name="Feng J.-D."/>
            <person name="Fong B."/>
            <person name="Fujii C.Y."/>
            <person name="Gill J.E."/>
            <person name="Goldsmith A.D."/>
            <person name="Haas B."/>
            <person name="Hansen N.F."/>
            <person name="Hughes B."/>
            <person name="Huizar L."/>
            <person name="Hunter J.L."/>
            <person name="Jenkins J."/>
            <person name="Johnson-Hopson C."/>
            <person name="Khan S."/>
            <person name="Khaykin E."/>
            <person name="Kim C.J."/>
            <person name="Koo H.L."/>
            <person name="Kremenetskaia I."/>
            <person name="Kurtz D.B."/>
            <person name="Kwan A."/>
            <person name="Lam B."/>
            <person name="Langin-Hooper S."/>
            <person name="Lee A."/>
            <person name="Lee J.M."/>
            <person name="Lenz C.A."/>
            <person name="Li J.H."/>
            <person name="Li Y.-P."/>
            <person name="Lin X."/>
            <person name="Liu S.X."/>
            <person name="Liu Z.A."/>
            <person name="Luros J.S."/>
            <person name="Maiti R."/>
            <person name="Marziali A."/>
            <person name="Militscher J."/>
            <person name="Miranda M."/>
            <person name="Nguyen M."/>
            <person name="Nierman W.C."/>
            <person name="Osborne B.I."/>
            <person name="Pai G."/>
            <person name="Peterson J."/>
            <person name="Pham P.K."/>
            <person name="Rizzo M."/>
            <person name="Rooney T."/>
            <person name="Rowley D."/>
            <person name="Sakano H."/>
            <person name="Salzberg S.L."/>
            <person name="Schwartz J.R."/>
            <person name="Shinn P."/>
            <person name="Southwick A.M."/>
            <person name="Sun H."/>
            <person name="Tallon L.J."/>
            <person name="Tambunga G."/>
            <person name="Toriumi M.J."/>
            <person name="Town C.D."/>
            <person name="Utterback T."/>
            <person name="Van Aken S."/>
            <person name="Vaysberg M."/>
            <person name="Vysotskaia V.S."/>
            <person name="Walker M."/>
            <person name="Wu D."/>
            <person name="Yu G."/>
            <person name="Fraser C.M."/>
            <person name="Venter J.C."/>
            <person name="Davis R.W."/>
        </authorList>
    </citation>
    <scope>NUCLEOTIDE SEQUENCE [LARGE SCALE GENOMIC DNA]</scope>
    <source>
        <strain>cv. Columbia</strain>
    </source>
</reference>
<reference key="2">
    <citation type="journal article" date="2017" name="Plant J.">
        <title>Araport11: a complete reannotation of the Arabidopsis thaliana reference genome.</title>
        <authorList>
            <person name="Cheng C.Y."/>
            <person name="Krishnakumar V."/>
            <person name="Chan A.P."/>
            <person name="Thibaud-Nissen F."/>
            <person name="Schobel S."/>
            <person name="Town C.D."/>
        </authorList>
    </citation>
    <scope>GENOME REANNOTATION</scope>
    <source>
        <strain>cv. Columbia</strain>
    </source>
</reference>
<reference key="3">
    <citation type="journal article" date="2004" name="Genome Res.">
        <title>Whole genome sequence comparisons and 'full-length' cDNA sequences: a combined approach to evaluate and improve Arabidopsis genome annotation.</title>
        <authorList>
            <person name="Castelli V."/>
            <person name="Aury J.-M."/>
            <person name="Jaillon O."/>
            <person name="Wincker P."/>
            <person name="Clepet C."/>
            <person name="Menard M."/>
            <person name="Cruaud C."/>
            <person name="Quetier F."/>
            <person name="Scarpelli C."/>
            <person name="Schaechter V."/>
            <person name="Temple G."/>
            <person name="Caboche M."/>
            <person name="Weissenbach J."/>
            <person name="Salanoubat M."/>
        </authorList>
    </citation>
    <scope>NUCLEOTIDE SEQUENCE [LARGE SCALE MRNA] (ISOFORM 1)</scope>
    <source>
        <strain>cv. Columbia</strain>
    </source>
</reference>
<reference key="4">
    <citation type="journal article" date="2009" name="DNA Res.">
        <title>Analysis of multiple occurrences of alternative splicing events in Arabidopsis thaliana using novel sequenced full-length cDNAs.</title>
        <authorList>
            <person name="Iida K."/>
            <person name="Fukami-Kobayashi K."/>
            <person name="Toyoda A."/>
            <person name="Sakaki Y."/>
            <person name="Kobayashi M."/>
            <person name="Seki M."/>
            <person name="Shinozaki K."/>
        </authorList>
    </citation>
    <scope>NUCLEOTIDE SEQUENCE [LARGE SCALE MRNA] (ISOFORM 3)</scope>
    <source>
        <strain>cv. Columbia</strain>
    </source>
</reference>
<reference key="5">
    <citation type="submission" date="2004-03" db="EMBL/GenBank/DDBJ databases">
        <title>Arabidopsis ORF clones.</title>
        <authorList>
            <person name="Cheuk R.F."/>
            <person name="Chen H."/>
            <person name="Kim C.J."/>
            <person name="Shinn P."/>
            <person name="Ecker J.R."/>
        </authorList>
    </citation>
    <scope>NUCLEOTIDE SEQUENCE [LARGE SCALE MRNA] (ISOFORM 2)</scope>
    <source>
        <strain>cv. Columbia</strain>
    </source>
</reference>
<reference key="6">
    <citation type="submission" date="2006-07" db="EMBL/GenBank/DDBJ databases">
        <title>Large-scale analysis of RIKEN Arabidopsis full-length (RAFL) cDNAs.</title>
        <authorList>
            <person name="Totoki Y."/>
            <person name="Seki M."/>
            <person name="Ishida J."/>
            <person name="Nakajima M."/>
            <person name="Enju A."/>
            <person name="Morosawa T."/>
            <person name="Kamiya A."/>
            <person name="Narusaka M."/>
            <person name="Shin-i T."/>
            <person name="Nakagawa M."/>
            <person name="Sakamoto N."/>
            <person name="Oishi K."/>
            <person name="Kohara Y."/>
            <person name="Kobayashi M."/>
            <person name="Toyoda A."/>
            <person name="Sakaki Y."/>
            <person name="Sakurai T."/>
            <person name="Iida K."/>
            <person name="Akiyama K."/>
            <person name="Satou M."/>
            <person name="Toyoda T."/>
            <person name="Konagaya A."/>
            <person name="Carninci P."/>
            <person name="Kawai J."/>
            <person name="Hayashizaki Y."/>
            <person name="Shinozaki K."/>
        </authorList>
    </citation>
    <scope>NUCLEOTIDE SEQUENCE [LARGE SCALE MRNA] (ISOFORM 2)</scope>
</reference>